<reference key="1">
    <citation type="journal article" date="2002" name="Proc. Natl. Acad. Sci. U.S.A.">
        <title>The complete genome of hyperthermophile Methanopyrus kandleri AV19 and monophyly of archaeal methanogens.</title>
        <authorList>
            <person name="Slesarev A.I."/>
            <person name="Mezhevaya K.V."/>
            <person name="Makarova K.S."/>
            <person name="Polushin N.N."/>
            <person name="Shcherbinina O.V."/>
            <person name="Shakhova V.V."/>
            <person name="Belova G.I."/>
            <person name="Aravind L."/>
            <person name="Natale D.A."/>
            <person name="Rogozin I.B."/>
            <person name="Tatusov R.L."/>
            <person name="Wolf Y.I."/>
            <person name="Stetter K.O."/>
            <person name="Malykh A.G."/>
            <person name="Koonin E.V."/>
            <person name="Kozyavkin S.A."/>
        </authorList>
    </citation>
    <scope>NUCLEOTIDE SEQUENCE [LARGE SCALE GENOMIC DNA]</scope>
    <source>
        <strain>AV19 / DSM 6324 / JCM 9639 / NBRC 100938</strain>
    </source>
</reference>
<dbReference type="EC" id="6.3.4.20" evidence="1"/>
<dbReference type="EMBL" id="AE009439">
    <property type="protein sequence ID" value="AAM02278.1"/>
    <property type="molecule type" value="Genomic_DNA"/>
</dbReference>
<dbReference type="RefSeq" id="WP_011019433.1">
    <property type="nucleotide sequence ID" value="NC_003551.1"/>
</dbReference>
<dbReference type="SMR" id="Q8TWG9"/>
<dbReference type="STRING" id="190192.MK1065"/>
<dbReference type="PaxDb" id="190192-MK1065"/>
<dbReference type="EnsemblBacteria" id="AAM02278">
    <property type="protein sequence ID" value="AAM02278"/>
    <property type="gene ID" value="MK1065"/>
</dbReference>
<dbReference type="GeneID" id="1477166"/>
<dbReference type="KEGG" id="mka:MK1065"/>
<dbReference type="HOGENOM" id="CLU_081854_1_0_2"/>
<dbReference type="InParanoid" id="Q8TWG9"/>
<dbReference type="OrthoDB" id="6532at2157"/>
<dbReference type="UniPathway" id="UPA00391"/>
<dbReference type="Proteomes" id="UP000001826">
    <property type="component" value="Chromosome"/>
</dbReference>
<dbReference type="GO" id="GO:0005524">
    <property type="term" value="F:ATP binding"/>
    <property type="evidence" value="ECO:0007669"/>
    <property type="project" value="UniProtKB-UniRule"/>
</dbReference>
<dbReference type="GO" id="GO:0016879">
    <property type="term" value="F:ligase activity, forming carbon-nitrogen bonds"/>
    <property type="evidence" value="ECO:0007669"/>
    <property type="project" value="UniProtKB-UniRule"/>
</dbReference>
<dbReference type="GO" id="GO:0008270">
    <property type="term" value="F:zinc ion binding"/>
    <property type="evidence" value="ECO:0007669"/>
    <property type="project" value="UniProtKB-UniRule"/>
</dbReference>
<dbReference type="CDD" id="cd01995">
    <property type="entry name" value="QueC-like"/>
    <property type="match status" value="1"/>
</dbReference>
<dbReference type="Gene3D" id="3.40.50.620">
    <property type="entry name" value="HUPs"/>
    <property type="match status" value="1"/>
</dbReference>
<dbReference type="HAMAP" id="MF_01633">
    <property type="entry name" value="QueC"/>
    <property type="match status" value="1"/>
</dbReference>
<dbReference type="InterPro" id="IPR018317">
    <property type="entry name" value="QueC"/>
</dbReference>
<dbReference type="InterPro" id="IPR014729">
    <property type="entry name" value="Rossmann-like_a/b/a_fold"/>
</dbReference>
<dbReference type="PANTHER" id="PTHR42914">
    <property type="entry name" value="7-CYANO-7-DEAZAGUANINE SYNTHASE"/>
    <property type="match status" value="1"/>
</dbReference>
<dbReference type="PANTHER" id="PTHR42914:SF1">
    <property type="entry name" value="7-CYANO-7-DEAZAGUANINE SYNTHASE"/>
    <property type="match status" value="1"/>
</dbReference>
<dbReference type="Pfam" id="PF06508">
    <property type="entry name" value="QueC"/>
    <property type="match status" value="1"/>
</dbReference>
<dbReference type="PIRSF" id="PIRSF006293">
    <property type="entry name" value="ExsB"/>
    <property type="match status" value="1"/>
</dbReference>
<dbReference type="SUPFAM" id="SSF52402">
    <property type="entry name" value="Adenine nucleotide alpha hydrolases-like"/>
    <property type="match status" value="1"/>
</dbReference>
<gene>
    <name evidence="1" type="primary">queC</name>
    <name type="ordered locus">MK1065</name>
</gene>
<name>QUEC_METKA</name>
<proteinExistence type="inferred from homology"/>
<comment type="function">
    <text evidence="1">Catalyzes the ATP-dependent conversion of 7-carboxy-7-deazaguanine (CDG) to 7-cyano-7-deazaguanine (preQ(0)).</text>
</comment>
<comment type="catalytic activity">
    <reaction evidence="1">
        <text>7-carboxy-7-deazaguanine + NH4(+) + ATP = 7-cyano-7-deazaguanine + ADP + phosphate + H2O + H(+)</text>
        <dbReference type="Rhea" id="RHEA:27982"/>
        <dbReference type="ChEBI" id="CHEBI:15377"/>
        <dbReference type="ChEBI" id="CHEBI:15378"/>
        <dbReference type="ChEBI" id="CHEBI:28938"/>
        <dbReference type="ChEBI" id="CHEBI:30616"/>
        <dbReference type="ChEBI" id="CHEBI:43474"/>
        <dbReference type="ChEBI" id="CHEBI:45075"/>
        <dbReference type="ChEBI" id="CHEBI:61036"/>
        <dbReference type="ChEBI" id="CHEBI:456216"/>
        <dbReference type="EC" id="6.3.4.20"/>
    </reaction>
</comment>
<comment type="cofactor">
    <cofactor evidence="1">
        <name>Zn(2+)</name>
        <dbReference type="ChEBI" id="CHEBI:29105"/>
    </cofactor>
    <text evidence="1">Binds 1 zinc ion per subunit.</text>
</comment>
<comment type="pathway">
    <text evidence="1">Purine metabolism; 7-cyano-7-deazaguanine biosynthesis.</text>
</comment>
<comment type="similarity">
    <text evidence="1">Belongs to the QueC family.</text>
</comment>
<protein>
    <recommendedName>
        <fullName evidence="1">7-cyano-7-deazaguanine synthase</fullName>
        <ecNumber evidence="1">6.3.4.20</ecNumber>
    </recommendedName>
    <alternativeName>
        <fullName evidence="1">7-cyano-7-carbaguanine synthase</fullName>
    </alternativeName>
    <alternativeName>
        <fullName evidence="1">Archaeosine biosynthesis protein QueC</fullName>
    </alternativeName>
    <alternativeName>
        <fullName evidence="1">PreQ(0) synthase</fullName>
    </alternativeName>
</protein>
<sequence>MATTVVLCSGGLDSSVIAKWAVEELGGRVICLFVDYGQRNAPFERRAAERIAEAVGAEFETVGTFWLRRLCPDNPMFAGRLPREAGTEDLSANWLPARNWNLLGVAAALCDHLYLEGEDDEFHIVWGINAEEAERFPDNTKEFADAVAEALKRGLPSRPRLHSPLAELYKPGIVRLGSELGAPMELSVSCYNPIWEDDTPVHCGECEACYHRKRAFERAGIEDPTEYLE</sequence>
<keyword id="KW-0067">ATP-binding</keyword>
<keyword id="KW-0436">Ligase</keyword>
<keyword id="KW-0479">Metal-binding</keyword>
<keyword id="KW-0547">Nucleotide-binding</keyword>
<keyword id="KW-1185">Reference proteome</keyword>
<keyword id="KW-0862">Zinc</keyword>
<feature type="chain" id="PRO_0000246977" description="7-cyano-7-deazaguanine synthase">
    <location>
        <begin position="1"/>
        <end position="229"/>
    </location>
</feature>
<feature type="binding site" evidence="1">
    <location>
        <begin position="8"/>
        <end position="18"/>
    </location>
    <ligand>
        <name>ATP</name>
        <dbReference type="ChEBI" id="CHEBI:30616"/>
    </ligand>
</feature>
<feature type="binding site" evidence="1">
    <location>
        <position position="190"/>
    </location>
    <ligand>
        <name>Zn(2+)</name>
        <dbReference type="ChEBI" id="CHEBI:29105"/>
    </ligand>
</feature>
<feature type="binding site" evidence="1">
    <location>
        <position position="203"/>
    </location>
    <ligand>
        <name>Zn(2+)</name>
        <dbReference type="ChEBI" id="CHEBI:29105"/>
    </ligand>
</feature>
<feature type="binding site" evidence="1">
    <location>
        <position position="206"/>
    </location>
    <ligand>
        <name>Zn(2+)</name>
        <dbReference type="ChEBI" id="CHEBI:29105"/>
    </ligand>
</feature>
<feature type="binding site" evidence="1">
    <location>
        <position position="209"/>
    </location>
    <ligand>
        <name>Zn(2+)</name>
        <dbReference type="ChEBI" id="CHEBI:29105"/>
    </ligand>
</feature>
<accession>Q8TWG9</accession>
<organism>
    <name type="scientific">Methanopyrus kandleri (strain AV19 / DSM 6324 / JCM 9639 / NBRC 100938)</name>
    <dbReference type="NCBI Taxonomy" id="190192"/>
    <lineage>
        <taxon>Archaea</taxon>
        <taxon>Methanobacteriati</taxon>
        <taxon>Methanobacteriota</taxon>
        <taxon>Methanomada group</taxon>
        <taxon>Methanopyri</taxon>
        <taxon>Methanopyrales</taxon>
        <taxon>Methanopyraceae</taxon>
        <taxon>Methanopyrus</taxon>
    </lineage>
</organism>
<evidence type="ECO:0000255" key="1">
    <source>
        <dbReference type="HAMAP-Rule" id="MF_01633"/>
    </source>
</evidence>